<proteinExistence type="predicted"/>
<gene>
    <name type="ORF">DDB_G0287573</name>
</gene>
<name>Y9240_DICDI</name>
<comment type="sequence caution" evidence="2">
    <conflict type="erroneous gene model prediction">
        <sequence resource="EMBL-CDS" id="EAL63686"/>
    </conflict>
</comment>
<dbReference type="EMBL" id="AAFI02000102">
    <property type="protein sequence ID" value="EAL63686.1"/>
    <property type="status" value="ALT_SEQ"/>
    <property type="molecule type" value="Genomic_DNA"/>
</dbReference>
<dbReference type="RefSeq" id="XP_637177.1">
    <property type="nucleotide sequence ID" value="XM_632085.1"/>
</dbReference>
<dbReference type="SMR" id="Q54K78"/>
<dbReference type="PaxDb" id="44689-DDB0219240"/>
<dbReference type="EnsemblProtists" id="EAL63686">
    <property type="protein sequence ID" value="EAL63686"/>
    <property type="gene ID" value="DDB_G0287573"/>
</dbReference>
<dbReference type="GeneID" id="8626178"/>
<dbReference type="KEGG" id="ddi:DDB_G0287573"/>
<dbReference type="dictyBase" id="DDB_G0287573"/>
<dbReference type="VEuPathDB" id="AmoebaDB:DDB_G0287573"/>
<dbReference type="eggNOG" id="ENOG502RI0P">
    <property type="taxonomic scope" value="Eukaryota"/>
</dbReference>
<dbReference type="InParanoid" id="Q54K78"/>
<dbReference type="PRO" id="PR:Q54K78"/>
<dbReference type="Proteomes" id="UP000002195">
    <property type="component" value="Chromosome 5"/>
</dbReference>
<dbReference type="PANTHER" id="PTHR21527">
    <property type="entry name" value="NUCLEOPORIN NUP35"/>
    <property type="match status" value="1"/>
</dbReference>
<dbReference type="PANTHER" id="PTHR21527:SF6">
    <property type="entry name" value="NUCLEOPORIN NUP35"/>
    <property type="match status" value="1"/>
</dbReference>
<protein>
    <recommendedName>
        <fullName>Putative uncharacterized protein DDB_G0287573</fullName>
    </recommendedName>
</protein>
<keyword id="KW-1185">Reference proteome</keyword>
<organism>
    <name type="scientific">Dictyostelium discoideum</name>
    <name type="common">Social amoeba</name>
    <dbReference type="NCBI Taxonomy" id="44689"/>
    <lineage>
        <taxon>Eukaryota</taxon>
        <taxon>Amoebozoa</taxon>
        <taxon>Evosea</taxon>
        <taxon>Eumycetozoa</taxon>
        <taxon>Dictyostelia</taxon>
        <taxon>Dictyosteliales</taxon>
        <taxon>Dictyosteliaceae</taxon>
        <taxon>Dictyostelium</taxon>
    </lineage>
</organism>
<evidence type="ECO:0000256" key="1">
    <source>
        <dbReference type="SAM" id="MobiDB-lite"/>
    </source>
</evidence>
<evidence type="ECO:0000305" key="2"/>
<reference key="1">
    <citation type="journal article" date="2005" name="Nature">
        <title>The genome of the social amoeba Dictyostelium discoideum.</title>
        <authorList>
            <person name="Eichinger L."/>
            <person name="Pachebat J.A."/>
            <person name="Gloeckner G."/>
            <person name="Rajandream M.A."/>
            <person name="Sucgang R."/>
            <person name="Berriman M."/>
            <person name="Song J."/>
            <person name="Olsen R."/>
            <person name="Szafranski K."/>
            <person name="Xu Q."/>
            <person name="Tunggal B."/>
            <person name="Kummerfeld S."/>
            <person name="Madera M."/>
            <person name="Konfortov B.A."/>
            <person name="Rivero F."/>
            <person name="Bankier A.T."/>
            <person name="Lehmann R."/>
            <person name="Hamlin N."/>
            <person name="Davies R."/>
            <person name="Gaudet P."/>
            <person name="Fey P."/>
            <person name="Pilcher K."/>
            <person name="Chen G."/>
            <person name="Saunders D."/>
            <person name="Sodergren E.J."/>
            <person name="Davis P."/>
            <person name="Kerhornou A."/>
            <person name="Nie X."/>
            <person name="Hall N."/>
            <person name="Anjard C."/>
            <person name="Hemphill L."/>
            <person name="Bason N."/>
            <person name="Farbrother P."/>
            <person name="Desany B."/>
            <person name="Just E."/>
            <person name="Morio T."/>
            <person name="Rost R."/>
            <person name="Churcher C.M."/>
            <person name="Cooper J."/>
            <person name="Haydock S."/>
            <person name="van Driessche N."/>
            <person name="Cronin A."/>
            <person name="Goodhead I."/>
            <person name="Muzny D.M."/>
            <person name="Mourier T."/>
            <person name="Pain A."/>
            <person name="Lu M."/>
            <person name="Harper D."/>
            <person name="Lindsay R."/>
            <person name="Hauser H."/>
            <person name="James K.D."/>
            <person name="Quiles M."/>
            <person name="Madan Babu M."/>
            <person name="Saito T."/>
            <person name="Buchrieser C."/>
            <person name="Wardroper A."/>
            <person name="Felder M."/>
            <person name="Thangavelu M."/>
            <person name="Johnson D."/>
            <person name="Knights A."/>
            <person name="Loulseged H."/>
            <person name="Mungall K.L."/>
            <person name="Oliver K."/>
            <person name="Price C."/>
            <person name="Quail M.A."/>
            <person name="Urushihara H."/>
            <person name="Hernandez J."/>
            <person name="Rabbinowitsch E."/>
            <person name="Steffen D."/>
            <person name="Sanders M."/>
            <person name="Ma J."/>
            <person name="Kohara Y."/>
            <person name="Sharp S."/>
            <person name="Simmonds M.N."/>
            <person name="Spiegler S."/>
            <person name="Tivey A."/>
            <person name="Sugano S."/>
            <person name="White B."/>
            <person name="Walker D."/>
            <person name="Woodward J.R."/>
            <person name="Winckler T."/>
            <person name="Tanaka Y."/>
            <person name="Shaulsky G."/>
            <person name="Schleicher M."/>
            <person name="Weinstock G.M."/>
            <person name="Rosenthal A."/>
            <person name="Cox E.C."/>
            <person name="Chisholm R.L."/>
            <person name="Gibbs R.A."/>
            <person name="Loomis W.F."/>
            <person name="Platzer M."/>
            <person name="Kay R.R."/>
            <person name="Williams J.G."/>
            <person name="Dear P.H."/>
            <person name="Noegel A.A."/>
            <person name="Barrell B.G."/>
            <person name="Kuspa A."/>
        </authorList>
    </citation>
    <scope>NUCLEOTIDE SEQUENCE [LARGE SCALE GENOMIC DNA]</scope>
    <source>
        <strain>AX4</strain>
    </source>
</reference>
<feature type="chain" id="PRO_0000347018" description="Putative uncharacterized protein DDB_G0287573">
    <location>
        <begin position="1"/>
        <end position="465"/>
    </location>
</feature>
<feature type="region of interest" description="Disordered" evidence="1">
    <location>
        <begin position="1"/>
        <end position="31"/>
    </location>
</feature>
<feature type="region of interest" description="Disordered" evidence="1">
    <location>
        <begin position="288"/>
        <end position="320"/>
    </location>
</feature>
<feature type="compositionally biased region" description="Basic and acidic residues" evidence="1">
    <location>
        <begin position="1"/>
        <end position="15"/>
    </location>
</feature>
<accession>Q54K78</accession>
<sequence length="465" mass="55214">MEKNYIFENSIYKDENENDNEDDQYYNNNSSNNDEIINEEYLIKKREKIETLFLYQNFQIVITELINLLYKLYSNNNNNNNNNSPLLSSIFNTNNEENNENPTTTTISLSNKIFESFSKCYHSCQNDTNCQCRWIMELLIQSLYEVGKPSDALKLVNRFYQDGISNTPINILILSIHLLVYLKSYNESKVIIIEALKRNRNEFKSDQYEQLIELLIFHVMFRMNEINESISLLQNDSYLSDWKKNGFIKALYEMVQIREFEEKNQRELQLKRETEKLQQQNQQQQQQQLEKQLINEQQQHQQQQELNNSSQPQQEQEQLPIKTQSNISIIKDIINESIHEILSIRDLKSLKLAINRVLFAVKRVSNSRNNNNNNNNNNNNLINTKTLKQQQQQKLNSNNKRQFGIKNVQQQQQQPYRNSQQYQQYRQNNRSILNSNNNNNNNNSSTANWGGLKQLLSNTFSFNRV</sequence>